<evidence type="ECO:0000255" key="1">
    <source>
        <dbReference type="PROSITE-ProRule" id="PRU00532"/>
    </source>
</evidence>
<sequence length="185" mass="21262">MKTKNEPKVILELAKESDLPEFQKKLQEAFAIAVIETFGDCEDGPIPSDNDVQESFNAPGAVVYHILQDGKNVGGAVVRINSQTNHNSLDLFYVSPEYHSQGIGLSAWKAIEAQYPDTVLWETVTPYFEKRNINFYVNKCGFHIVEFYNEHHSNPHMHRNGREDDKPLLNDDDFFRFVKIMKKKD</sequence>
<protein>
    <recommendedName>
        <fullName>Uncharacterized protein YrkN</fullName>
    </recommendedName>
</protein>
<feature type="chain" id="PRO_0000049877" description="Uncharacterized protein YrkN">
    <location>
        <begin position="1"/>
        <end position="185"/>
    </location>
</feature>
<feature type="domain" description="N-acetyltransferase" evidence="1">
    <location>
        <begin position="9"/>
        <end position="169"/>
    </location>
</feature>
<gene>
    <name type="primary">yrkN</name>
    <name type="ordered locus">BSU26450</name>
</gene>
<organism>
    <name type="scientific">Bacillus subtilis (strain 168)</name>
    <dbReference type="NCBI Taxonomy" id="224308"/>
    <lineage>
        <taxon>Bacteria</taxon>
        <taxon>Bacillati</taxon>
        <taxon>Bacillota</taxon>
        <taxon>Bacilli</taxon>
        <taxon>Bacillales</taxon>
        <taxon>Bacillaceae</taxon>
        <taxon>Bacillus</taxon>
    </lineage>
</organism>
<accession>P54441</accession>
<dbReference type="EMBL" id="D84432">
    <property type="protein sequence ID" value="BAA12369.1"/>
    <property type="molecule type" value="Genomic_DNA"/>
</dbReference>
<dbReference type="EMBL" id="AL009126">
    <property type="protein sequence ID" value="CAB14586.1"/>
    <property type="molecule type" value="Genomic_DNA"/>
</dbReference>
<dbReference type="PIR" id="D69977">
    <property type="entry name" value="D69977"/>
</dbReference>
<dbReference type="RefSeq" id="NP_390522.1">
    <property type="nucleotide sequence ID" value="NC_000964.3"/>
</dbReference>
<dbReference type="RefSeq" id="WP_003229892.1">
    <property type="nucleotide sequence ID" value="NZ_OZ025638.1"/>
</dbReference>
<dbReference type="SMR" id="P54441"/>
<dbReference type="FunCoup" id="P54441">
    <property type="interactions" value="25"/>
</dbReference>
<dbReference type="STRING" id="224308.BSU26450"/>
<dbReference type="PaxDb" id="224308-BSU26450"/>
<dbReference type="EnsemblBacteria" id="CAB14586">
    <property type="protein sequence ID" value="CAB14586"/>
    <property type="gene ID" value="BSU_26450"/>
</dbReference>
<dbReference type="GeneID" id="937664"/>
<dbReference type="KEGG" id="bsu:BSU26450"/>
<dbReference type="PATRIC" id="fig|224308.179.peg.2874"/>
<dbReference type="eggNOG" id="COG0454">
    <property type="taxonomic scope" value="Bacteria"/>
</dbReference>
<dbReference type="InParanoid" id="P54441"/>
<dbReference type="OrthoDB" id="9786032at2"/>
<dbReference type="BioCyc" id="BSUB:BSU26450-MONOMER"/>
<dbReference type="Proteomes" id="UP000001570">
    <property type="component" value="Chromosome"/>
</dbReference>
<dbReference type="GO" id="GO:0016747">
    <property type="term" value="F:acyltransferase activity, transferring groups other than amino-acyl groups"/>
    <property type="evidence" value="ECO:0007669"/>
    <property type="project" value="InterPro"/>
</dbReference>
<dbReference type="CDD" id="cd04301">
    <property type="entry name" value="NAT_SF"/>
    <property type="match status" value="1"/>
</dbReference>
<dbReference type="Gene3D" id="3.40.630.30">
    <property type="match status" value="1"/>
</dbReference>
<dbReference type="InterPro" id="IPR016181">
    <property type="entry name" value="Acyl_CoA_acyltransferase"/>
</dbReference>
<dbReference type="InterPro" id="IPR000182">
    <property type="entry name" value="GNAT_dom"/>
</dbReference>
<dbReference type="Pfam" id="PF00583">
    <property type="entry name" value="Acetyltransf_1"/>
    <property type="match status" value="1"/>
</dbReference>
<dbReference type="SUPFAM" id="SSF55729">
    <property type="entry name" value="Acyl-CoA N-acyltransferases (Nat)"/>
    <property type="match status" value="1"/>
</dbReference>
<dbReference type="PROSITE" id="PS51186">
    <property type="entry name" value="GNAT"/>
    <property type="match status" value="1"/>
</dbReference>
<name>YRKN_BACSU</name>
<proteinExistence type="predicted"/>
<reference key="1">
    <citation type="journal article" date="1996" name="Microbiology">
        <title>Systematic sequencing of the 283 kb 210 degrees-232 degrees region of the Bacillus subtilis genome containing the skin element and many sporulation genes.</title>
        <authorList>
            <person name="Mizuno M."/>
            <person name="Masuda S."/>
            <person name="Takemaru K."/>
            <person name="Hosono S."/>
            <person name="Sato T."/>
            <person name="Takeuchi M."/>
            <person name="Kobayashi Y."/>
        </authorList>
    </citation>
    <scope>NUCLEOTIDE SEQUENCE [GENOMIC DNA]</scope>
    <source>
        <strain>168 / JH642</strain>
    </source>
</reference>
<reference key="2">
    <citation type="journal article" date="1997" name="Nature">
        <title>The complete genome sequence of the Gram-positive bacterium Bacillus subtilis.</title>
        <authorList>
            <person name="Kunst F."/>
            <person name="Ogasawara N."/>
            <person name="Moszer I."/>
            <person name="Albertini A.M."/>
            <person name="Alloni G."/>
            <person name="Azevedo V."/>
            <person name="Bertero M.G."/>
            <person name="Bessieres P."/>
            <person name="Bolotin A."/>
            <person name="Borchert S."/>
            <person name="Borriss R."/>
            <person name="Boursier L."/>
            <person name="Brans A."/>
            <person name="Braun M."/>
            <person name="Brignell S.C."/>
            <person name="Bron S."/>
            <person name="Brouillet S."/>
            <person name="Bruschi C.V."/>
            <person name="Caldwell B."/>
            <person name="Capuano V."/>
            <person name="Carter N.M."/>
            <person name="Choi S.-K."/>
            <person name="Codani J.-J."/>
            <person name="Connerton I.F."/>
            <person name="Cummings N.J."/>
            <person name="Daniel R.A."/>
            <person name="Denizot F."/>
            <person name="Devine K.M."/>
            <person name="Duesterhoeft A."/>
            <person name="Ehrlich S.D."/>
            <person name="Emmerson P.T."/>
            <person name="Entian K.-D."/>
            <person name="Errington J."/>
            <person name="Fabret C."/>
            <person name="Ferrari E."/>
            <person name="Foulger D."/>
            <person name="Fritz C."/>
            <person name="Fujita M."/>
            <person name="Fujita Y."/>
            <person name="Fuma S."/>
            <person name="Galizzi A."/>
            <person name="Galleron N."/>
            <person name="Ghim S.-Y."/>
            <person name="Glaser P."/>
            <person name="Goffeau A."/>
            <person name="Golightly E.J."/>
            <person name="Grandi G."/>
            <person name="Guiseppi G."/>
            <person name="Guy B.J."/>
            <person name="Haga K."/>
            <person name="Haiech J."/>
            <person name="Harwood C.R."/>
            <person name="Henaut A."/>
            <person name="Hilbert H."/>
            <person name="Holsappel S."/>
            <person name="Hosono S."/>
            <person name="Hullo M.-F."/>
            <person name="Itaya M."/>
            <person name="Jones L.-M."/>
            <person name="Joris B."/>
            <person name="Karamata D."/>
            <person name="Kasahara Y."/>
            <person name="Klaerr-Blanchard M."/>
            <person name="Klein C."/>
            <person name="Kobayashi Y."/>
            <person name="Koetter P."/>
            <person name="Koningstein G."/>
            <person name="Krogh S."/>
            <person name="Kumano M."/>
            <person name="Kurita K."/>
            <person name="Lapidus A."/>
            <person name="Lardinois S."/>
            <person name="Lauber J."/>
            <person name="Lazarevic V."/>
            <person name="Lee S.-M."/>
            <person name="Levine A."/>
            <person name="Liu H."/>
            <person name="Masuda S."/>
            <person name="Mauel C."/>
            <person name="Medigue C."/>
            <person name="Medina N."/>
            <person name="Mellado R.P."/>
            <person name="Mizuno M."/>
            <person name="Moestl D."/>
            <person name="Nakai S."/>
            <person name="Noback M."/>
            <person name="Noone D."/>
            <person name="O'Reilly M."/>
            <person name="Ogawa K."/>
            <person name="Ogiwara A."/>
            <person name="Oudega B."/>
            <person name="Park S.-H."/>
            <person name="Parro V."/>
            <person name="Pohl T.M."/>
            <person name="Portetelle D."/>
            <person name="Porwollik S."/>
            <person name="Prescott A.M."/>
            <person name="Presecan E."/>
            <person name="Pujic P."/>
            <person name="Purnelle B."/>
            <person name="Rapoport G."/>
            <person name="Rey M."/>
            <person name="Reynolds S."/>
            <person name="Rieger M."/>
            <person name="Rivolta C."/>
            <person name="Rocha E."/>
            <person name="Roche B."/>
            <person name="Rose M."/>
            <person name="Sadaie Y."/>
            <person name="Sato T."/>
            <person name="Scanlan E."/>
            <person name="Schleich S."/>
            <person name="Schroeter R."/>
            <person name="Scoffone F."/>
            <person name="Sekiguchi J."/>
            <person name="Sekowska A."/>
            <person name="Seror S.J."/>
            <person name="Serror P."/>
            <person name="Shin B.-S."/>
            <person name="Soldo B."/>
            <person name="Sorokin A."/>
            <person name="Tacconi E."/>
            <person name="Takagi T."/>
            <person name="Takahashi H."/>
            <person name="Takemaru K."/>
            <person name="Takeuchi M."/>
            <person name="Tamakoshi A."/>
            <person name="Tanaka T."/>
            <person name="Terpstra P."/>
            <person name="Tognoni A."/>
            <person name="Tosato V."/>
            <person name="Uchiyama S."/>
            <person name="Vandenbol M."/>
            <person name="Vannier F."/>
            <person name="Vassarotti A."/>
            <person name="Viari A."/>
            <person name="Wambutt R."/>
            <person name="Wedler E."/>
            <person name="Wedler H."/>
            <person name="Weitzenegger T."/>
            <person name="Winters P."/>
            <person name="Wipat A."/>
            <person name="Yamamoto H."/>
            <person name="Yamane K."/>
            <person name="Yasumoto K."/>
            <person name="Yata K."/>
            <person name="Yoshida K."/>
            <person name="Yoshikawa H.-F."/>
            <person name="Zumstein E."/>
            <person name="Yoshikawa H."/>
            <person name="Danchin A."/>
        </authorList>
    </citation>
    <scope>NUCLEOTIDE SEQUENCE [LARGE SCALE GENOMIC DNA]</scope>
    <source>
        <strain>168</strain>
    </source>
</reference>
<keyword id="KW-1185">Reference proteome</keyword>